<sequence length="80" mass="9364">MKDNVHPNYKDVVFHDVTSDFKILTRSTMTSKETVKWEDGQEYPLIKVEISSSSHPFYTGKHKVIDTGGRIDKFQKRYAR</sequence>
<protein>
    <recommendedName>
        <fullName evidence="1">Large ribosomal subunit protein bL31B</fullName>
    </recommendedName>
    <alternativeName>
        <fullName evidence="2">50S ribosomal protein L31 type B</fullName>
    </alternativeName>
</protein>
<dbReference type="EMBL" id="AP008229">
    <property type="protein sequence ID" value="BAE67805.1"/>
    <property type="molecule type" value="Genomic_DNA"/>
</dbReference>
<dbReference type="RefSeq" id="WP_005911911.1">
    <property type="nucleotide sequence ID" value="NC_007705.1"/>
</dbReference>
<dbReference type="SMR" id="Q2P6M2"/>
<dbReference type="KEGG" id="xom:XOO1050"/>
<dbReference type="HOGENOM" id="CLU_114306_2_2_6"/>
<dbReference type="GO" id="GO:1990904">
    <property type="term" value="C:ribonucleoprotein complex"/>
    <property type="evidence" value="ECO:0007669"/>
    <property type="project" value="UniProtKB-KW"/>
</dbReference>
<dbReference type="GO" id="GO:0005840">
    <property type="term" value="C:ribosome"/>
    <property type="evidence" value="ECO:0007669"/>
    <property type="project" value="UniProtKB-KW"/>
</dbReference>
<dbReference type="GO" id="GO:0003735">
    <property type="term" value="F:structural constituent of ribosome"/>
    <property type="evidence" value="ECO:0007669"/>
    <property type="project" value="InterPro"/>
</dbReference>
<dbReference type="GO" id="GO:0006412">
    <property type="term" value="P:translation"/>
    <property type="evidence" value="ECO:0007669"/>
    <property type="project" value="UniProtKB-UniRule"/>
</dbReference>
<dbReference type="Gene3D" id="4.10.830.30">
    <property type="entry name" value="Ribosomal protein L31"/>
    <property type="match status" value="1"/>
</dbReference>
<dbReference type="HAMAP" id="MF_00502">
    <property type="entry name" value="Ribosomal_bL31_2"/>
    <property type="match status" value="1"/>
</dbReference>
<dbReference type="InterPro" id="IPR034704">
    <property type="entry name" value="Ribosomal_bL28/bL31-like_sf"/>
</dbReference>
<dbReference type="InterPro" id="IPR002150">
    <property type="entry name" value="Ribosomal_bL31"/>
</dbReference>
<dbReference type="InterPro" id="IPR027493">
    <property type="entry name" value="Ribosomal_bL31_B"/>
</dbReference>
<dbReference type="InterPro" id="IPR042105">
    <property type="entry name" value="Ribosomal_bL31_sf"/>
</dbReference>
<dbReference type="NCBIfam" id="TIGR00105">
    <property type="entry name" value="L31"/>
    <property type="match status" value="1"/>
</dbReference>
<dbReference type="NCBIfam" id="NF002462">
    <property type="entry name" value="PRK01678.1"/>
    <property type="match status" value="1"/>
</dbReference>
<dbReference type="PANTHER" id="PTHR33280">
    <property type="entry name" value="50S RIBOSOMAL PROTEIN L31, CHLOROPLASTIC"/>
    <property type="match status" value="1"/>
</dbReference>
<dbReference type="PANTHER" id="PTHR33280:SF6">
    <property type="entry name" value="LARGE RIBOSOMAL SUBUNIT PROTEIN BL31A"/>
    <property type="match status" value="1"/>
</dbReference>
<dbReference type="Pfam" id="PF01197">
    <property type="entry name" value="Ribosomal_L31"/>
    <property type="match status" value="1"/>
</dbReference>
<dbReference type="PRINTS" id="PR01249">
    <property type="entry name" value="RIBOSOMALL31"/>
</dbReference>
<dbReference type="SUPFAM" id="SSF143800">
    <property type="entry name" value="L28p-like"/>
    <property type="match status" value="1"/>
</dbReference>
<dbReference type="PROSITE" id="PS01143">
    <property type="entry name" value="RIBOSOMAL_L31"/>
    <property type="match status" value="1"/>
</dbReference>
<keyword id="KW-0687">Ribonucleoprotein</keyword>
<keyword id="KW-0689">Ribosomal protein</keyword>
<accession>Q2P6M2</accession>
<gene>
    <name evidence="1" type="primary">rpmE2</name>
    <name type="ordered locus">XOO1050</name>
</gene>
<feature type="chain" id="PRO_0000259133" description="Large ribosomal subunit protein bL31B">
    <location>
        <begin position="1"/>
        <end position="80"/>
    </location>
</feature>
<organism>
    <name type="scientific">Xanthomonas oryzae pv. oryzae (strain MAFF 311018)</name>
    <dbReference type="NCBI Taxonomy" id="342109"/>
    <lineage>
        <taxon>Bacteria</taxon>
        <taxon>Pseudomonadati</taxon>
        <taxon>Pseudomonadota</taxon>
        <taxon>Gammaproteobacteria</taxon>
        <taxon>Lysobacterales</taxon>
        <taxon>Lysobacteraceae</taxon>
        <taxon>Xanthomonas</taxon>
    </lineage>
</organism>
<comment type="subunit">
    <text evidence="1">Part of the 50S ribosomal subunit.</text>
</comment>
<comment type="similarity">
    <text evidence="1">Belongs to the bacterial ribosomal protein bL31 family. Type B subfamily.</text>
</comment>
<proteinExistence type="inferred from homology"/>
<name>RL31B_XANOM</name>
<reference key="1">
    <citation type="journal article" date="2005" name="Jpn. Agric. Res. Q.">
        <title>Genome sequence of Xanthomonas oryzae pv. oryzae suggests contribution of large numbers of effector genes and insertion sequences to its race diversity.</title>
        <authorList>
            <person name="Ochiai H."/>
            <person name="Inoue Y."/>
            <person name="Takeya M."/>
            <person name="Sasaki A."/>
            <person name="Kaku H."/>
        </authorList>
    </citation>
    <scope>NUCLEOTIDE SEQUENCE [LARGE SCALE GENOMIC DNA]</scope>
    <source>
        <strain>MAFF 311018</strain>
    </source>
</reference>
<evidence type="ECO:0000255" key="1">
    <source>
        <dbReference type="HAMAP-Rule" id="MF_00502"/>
    </source>
</evidence>
<evidence type="ECO:0000305" key="2"/>